<protein>
    <recommendedName>
        <fullName>Polymerase cofactor VP35</fullName>
    </recommendedName>
    <alternativeName>
        <fullName>Marburg VP35</fullName>
        <shortName>mVP35</shortName>
    </alternativeName>
</protein>
<organismHost>
    <name type="scientific">Chlorocebus aethiops</name>
    <name type="common">Green monkey</name>
    <name type="synonym">Cercopithecus aethiops</name>
    <dbReference type="NCBI Taxonomy" id="9534"/>
</organismHost>
<organismHost>
    <name type="scientific">Homo sapiens</name>
    <name type="common">Human</name>
    <dbReference type="NCBI Taxonomy" id="9606"/>
</organismHost>
<organismHost>
    <name type="scientific">Rousettus aegyptiacus</name>
    <name type="common">Egyptian fruit bat</name>
    <name type="synonym">Pteropus aegyptiacus</name>
    <dbReference type="NCBI Taxonomy" id="9407"/>
</organismHost>
<keyword id="KW-0175">Coiled coil</keyword>
<keyword id="KW-1035">Host cytoplasm</keyword>
<keyword id="KW-0804">Transcription</keyword>
<keyword id="KW-0693">Viral RNA replication</keyword>
<keyword id="KW-0946">Virion</keyword>
<accession>Q1PD52</accession>
<name>VP35_MABVA</name>
<comment type="function">
    <text evidence="1">Plays an essential role in viral RNA synthesis and also a role in suppressing innate immune signaling.</text>
</comment>
<comment type="subunit">
    <text evidence="1 2">Homooligomer. Homomultimerization via the coiled coil domain is a prerequisite for binding to L. Found in a trimeric complex in which VP35 bridges L and the nucleoprotein (By similarity). Interacts with NP (By similarity). Disrupts innate immune signaling in infected host cell (By similarity).</text>
</comment>
<comment type="subcellular location">
    <subcellularLocation>
        <location evidence="1">Virion</location>
    </subcellularLocation>
    <subcellularLocation>
        <location evidence="1">Host cytoplasm</location>
    </subcellularLocation>
</comment>
<comment type="similarity">
    <text evidence="4 5">Belongs to the filoviridae polymerase cofactor VP35 family.</text>
</comment>
<organism>
    <name type="scientific">Lake Victoria marburgvirus (strain Angola/2005)</name>
    <name type="common">MARV</name>
    <dbReference type="NCBI Taxonomy" id="378830"/>
    <lineage>
        <taxon>Viruses</taxon>
        <taxon>Riboviria</taxon>
        <taxon>Orthornavirae</taxon>
        <taxon>Negarnaviricota</taxon>
        <taxon>Haploviricotina</taxon>
        <taxon>Monjiviricetes</taxon>
        <taxon>Mononegavirales</taxon>
        <taxon>Filoviridae</taxon>
        <taxon>Orthomarburgvirus</taxon>
        <taxon>Orthomarburgvirus marburgense</taxon>
    </lineage>
</organism>
<sequence length="329" mass="36145">MWDSSYMQQVSEGLMTGKVPIDQVFGTNPLEKLYKRRKPKGTVGLQCSPCLMSKATSTDDIIWDQLVVRKTLADLLIPINRQISDIQSTLSEVTTRVHEIERQLHEITPVLKMGRTLEAISKGMSEMLAKYDHLVISTGRTTAPAAAFDAYLNEHGVPPPQPAIFKDLGVAQQACSKGTTVKNATTDAADKMSKVLELSEETFSKPNLSAKDLALLLFTHLPGNNTPFHILAQVLSKIAYKSGKSGAFLDAFHQILSEGENAQAALTRLSRTFDAFLGVVPPVIRVKNFQTVPRPCQKSLRAVPPNPTIDKGWVCVYSSEQGETRALKI</sequence>
<reference key="1">
    <citation type="journal article" date="2006" name="J. Virol.">
        <title>Marburgvirus genomics and association with a large hemorrhagic fever outbreak in Angola.</title>
        <authorList>
            <person name="Towner J.S."/>
            <person name="Khristova M.L."/>
            <person name="Sealy T.K."/>
            <person name="Vincent M.J."/>
            <person name="Erickson B.R."/>
            <person name="Bawiec D.A."/>
            <person name="Hartman A.L."/>
            <person name="Comer J.A."/>
            <person name="Zaki S.R."/>
            <person name="Stroeher U."/>
            <person name="Gomes da Silva F."/>
            <person name="del Castillo F."/>
            <person name="Rollin P.E."/>
            <person name="Ksiazek T.G."/>
            <person name="Nichol S.T."/>
        </authorList>
    </citation>
    <scope>NUCLEOTIDE SEQUENCE [GENOMIC RNA]</scope>
    <source>
        <strain>Isolate Ang0126</strain>
        <strain>Isolate Ang0214</strain>
        <strain>Isolate Ang0215</strain>
        <strain>Isolate Ang0754</strain>
        <strain>Isolate Ang0998</strain>
        <strain>Isolate Ang1379c</strain>
        <strain>Isolate Ang1381</strain>
        <strain>Isolate Ang1386</strain>
    </source>
</reference>
<dbReference type="EMBL" id="DQ447653">
    <property type="protein sequence ID" value="ABE27013.1"/>
    <property type="molecule type" value="Genomic_RNA"/>
</dbReference>
<dbReference type="EMBL" id="DQ447654">
    <property type="protein sequence ID" value="ABE27020.1"/>
    <property type="molecule type" value="Genomic_RNA"/>
</dbReference>
<dbReference type="EMBL" id="DQ447655">
    <property type="protein sequence ID" value="ABE27027.1"/>
    <property type="molecule type" value="Genomic_RNA"/>
</dbReference>
<dbReference type="EMBL" id="DQ447656">
    <property type="protein sequence ID" value="ABE27034.1"/>
    <property type="molecule type" value="Genomic_RNA"/>
</dbReference>
<dbReference type="EMBL" id="DQ447657">
    <property type="protein sequence ID" value="ABE27041.1"/>
    <property type="molecule type" value="Genomic_RNA"/>
</dbReference>
<dbReference type="EMBL" id="DQ447658">
    <property type="protein sequence ID" value="ABE27048.1"/>
    <property type="molecule type" value="Genomic_RNA"/>
</dbReference>
<dbReference type="EMBL" id="DQ447659">
    <property type="protein sequence ID" value="ABE27055.1"/>
    <property type="molecule type" value="Genomic_RNA"/>
</dbReference>
<dbReference type="EMBL" id="DQ447660">
    <property type="protein sequence ID" value="ABE27062.1"/>
    <property type="molecule type" value="Genomic_RNA"/>
</dbReference>
<dbReference type="SMR" id="Q1PD52"/>
<dbReference type="Proteomes" id="UP000008242">
    <property type="component" value="Genome"/>
</dbReference>
<dbReference type="Proteomes" id="UP000097432">
    <property type="component" value="Genome"/>
</dbReference>
<dbReference type="Proteomes" id="UP000102513">
    <property type="component" value="Genome"/>
</dbReference>
<dbReference type="Proteomes" id="UP000109618">
    <property type="component" value="Genome"/>
</dbReference>
<dbReference type="Proteomes" id="UP000115353">
    <property type="component" value="Genome"/>
</dbReference>
<dbReference type="Proteomes" id="UP000130744">
    <property type="component" value="Genome"/>
</dbReference>
<dbReference type="Proteomes" id="UP000168007">
    <property type="component" value="Genome"/>
</dbReference>
<dbReference type="Proteomes" id="UP000171838">
    <property type="component" value="Genome"/>
</dbReference>
<dbReference type="GO" id="GO:0030430">
    <property type="term" value="C:host cell cytoplasm"/>
    <property type="evidence" value="ECO:0007669"/>
    <property type="project" value="UniProtKB-SubCell"/>
</dbReference>
<dbReference type="GO" id="GO:0044423">
    <property type="term" value="C:virion component"/>
    <property type="evidence" value="ECO:0007669"/>
    <property type="project" value="UniProtKB-KW"/>
</dbReference>
<dbReference type="CDD" id="cd21030">
    <property type="entry name" value="V35-RBD_P-protein-C_like"/>
    <property type="match status" value="1"/>
</dbReference>
<dbReference type="FunFam" id="2.10.10.70:FF:000001">
    <property type="entry name" value="Polymerase cofactor VP35"/>
    <property type="match status" value="1"/>
</dbReference>
<dbReference type="Gene3D" id="2.10.10.70">
    <property type="entry name" value="Filoviridae VP35, C-terminal inhibitory domain, beta-sheet subdomain"/>
    <property type="match status" value="1"/>
</dbReference>
<dbReference type="Gene3D" id="1.10.8.950">
    <property type="entry name" value="Filoviridae VP35, C-terminal inhibitory domain, helical subdomain"/>
    <property type="match status" value="1"/>
</dbReference>
<dbReference type="InterPro" id="IPR002953">
    <property type="entry name" value="Filo_VP35"/>
</dbReference>
<dbReference type="InterPro" id="IPR031163">
    <property type="entry name" value="VP35_IID"/>
</dbReference>
<dbReference type="InterPro" id="IPR043061">
    <property type="entry name" value="VP35_IID_b-sht"/>
</dbReference>
<dbReference type="InterPro" id="IPR043060">
    <property type="entry name" value="VP35_IID_hlx"/>
</dbReference>
<dbReference type="Pfam" id="PF02097">
    <property type="entry name" value="Filo_VP35"/>
    <property type="match status" value="1"/>
</dbReference>
<dbReference type="PIRSF" id="PIRSF018326">
    <property type="entry name" value="VP35_FiloV"/>
    <property type="match status" value="1"/>
</dbReference>
<dbReference type="PRINTS" id="PR01240">
    <property type="entry name" value="FILOVP35"/>
</dbReference>
<dbReference type="PROSITE" id="PS51735">
    <property type="entry name" value="VP35_IID"/>
    <property type="match status" value="1"/>
</dbReference>
<gene>
    <name type="primary">VP35</name>
</gene>
<proteinExistence type="inferred from homology"/>
<evidence type="ECO:0000250" key="1">
    <source>
        <dbReference type="UniProtKB" id="P35259"/>
    </source>
</evidence>
<evidence type="ECO:0000250" key="2">
    <source>
        <dbReference type="UniProtKB" id="Q6UY68"/>
    </source>
</evidence>
<evidence type="ECO:0000255" key="3"/>
<evidence type="ECO:0000255" key="4">
    <source>
        <dbReference type="PROSITE-ProRule" id="PRU01071"/>
    </source>
</evidence>
<evidence type="ECO:0000305" key="5"/>
<feature type="chain" id="PRO_0000314995" description="Polymerase cofactor VP35">
    <location>
        <begin position="1"/>
        <end position="329"/>
    </location>
</feature>
<feature type="domain" description="VP35 IID" evidence="4">
    <location>
        <begin position="204"/>
        <end position="329"/>
    </location>
</feature>
<feature type="coiled-coil region" evidence="3">
    <location>
        <begin position="70"/>
        <end position="120"/>
    </location>
</feature>